<accession>L0TC47</accession>
<reference key="1">
    <citation type="journal article" date="1998" name="Nature">
        <title>Deciphering the biology of Mycobacterium tuberculosis from the complete genome sequence.</title>
        <authorList>
            <person name="Cole S.T."/>
            <person name="Brosch R."/>
            <person name="Parkhill J."/>
            <person name="Garnier T."/>
            <person name="Churcher C.M."/>
            <person name="Harris D.E."/>
            <person name="Gordon S.V."/>
            <person name="Eiglmeier K."/>
            <person name="Gas S."/>
            <person name="Barry C.E. III"/>
            <person name="Tekaia F."/>
            <person name="Badcock K."/>
            <person name="Basham D."/>
            <person name="Brown D."/>
            <person name="Chillingworth T."/>
            <person name="Connor R."/>
            <person name="Davies R.M."/>
            <person name="Devlin K."/>
            <person name="Feltwell T."/>
            <person name="Gentles S."/>
            <person name="Hamlin N."/>
            <person name="Holroyd S."/>
            <person name="Hornsby T."/>
            <person name="Jagels K."/>
            <person name="Krogh A."/>
            <person name="McLean J."/>
            <person name="Moule S."/>
            <person name="Murphy L.D."/>
            <person name="Oliver S."/>
            <person name="Osborne J."/>
            <person name="Quail M.A."/>
            <person name="Rajandream M.A."/>
            <person name="Rogers J."/>
            <person name="Rutter S."/>
            <person name="Seeger K."/>
            <person name="Skelton S."/>
            <person name="Squares S."/>
            <person name="Squares R."/>
            <person name="Sulston J.E."/>
            <person name="Taylor K."/>
            <person name="Whitehead S."/>
            <person name="Barrell B.G."/>
        </authorList>
    </citation>
    <scope>NUCLEOTIDE SEQUENCE [LARGE SCALE GENOMIC DNA]</scope>
    <source>
        <strain>ATCC 25618 / H37Rv</strain>
    </source>
</reference>
<reference key="2">
    <citation type="journal article" date="2022" name="Genomics">
        <title>Deep N-terminomics of Mycobacterium tuberculosis H37Rv extensively correct annotated encoding genes.</title>
        <authorList>
            <person name="Shi J."/>
            <person name="Meng S."/>
            <person name="Wan L."/>
            <person name="Zhang Z."/>
            <person name="Jiang S."/>
            <person name="Zhu H."/>
            <person name="Dai E."/>
            <person name="Chang L."/>
            <person name="Gao H."/>
            <person name="Wan K."/>
            <person name="Zhang L."/>
            <person name="Zhao X."/>
            <person name="Liu H."/>
            <person name="Lyu Z."/>
            <person name="Zhang Y."/>
            <person name="Xu P."/>
        </authorList>
    </citation>
    <scope>PROTEIN SEQUENCE OF 18-29</scope>
    <scope>SEQUENCE REVISION TO N-TERMINUS</scope>
    <source>
        <strain>H37Rv</strain>
    </source>
</reference>
<reference key="3">
    <citation type="journal article" date="2011" name="Mol. Cell. Proteomics">
        <title>Proteogenomic analysis of Mycobacterium tuberculosis by high resolution mass spectrometry.</title>
        <authorList>
            <person name="Kelkar D.S."/>
            <person name="Kumar D."/>
            <person name="Kumar P."/>
            <person name="Balakrishnan L."/>
            <person name="Muthusamy B."/>
            <person name="Yadav A.K."/>
            <person name="Shrivastava P."/>
            <person name="Marimuthu A."/>
            <person name="Anand S."/>
            <person name="Sundaram H."/>
            <person name="Kingsbury R."/>
            <person name="Harsha H.C."/>
            <person name="Nair B."/>
            <person name="Prasad T.S."/>
            <person name="Chauhan D.S."/>
            <person name="Katoch K."/>
            <person name="Katoch V.M."/>
            <person name="Kumar P."/>
            <person name="Chaerkady R."/>
            <person name="Ramachandran S."/>
            <person name="Dash D."/>
            <person name="Pandey A."/>
        </authorList>
    </citation>
    <scope>IDENTIFICATION BY MASS SPECTROMETRY [LARGE SCALE ANALYSIS]</scope>
    <scope>SEQUENCE REVISION TO N-TERMINUS</scope>
    <source>
        <strain>ATCC 25618 / H37Rv</strain>
    </source>
</reference>
<reference key="4">
    <citation type="journal article" date="2014" name="Mol. Biol. Rep.">
        <title>Characterization of an acid inducible lipase Rv3203 from Mycobacterium tuberculosis H37Rv.</title>
        <authorList>
            <person name="Singh G."/>
            <person name="Arya S."/>
            <person name="Narang D."/>
            <person name="Jadeja D."/>
            <person name="Singh G."/>
            <person name="Gupta U.D."/>
            <person name="Singh K."/>
            <person name="Kaur J."/>
        </authorList>
    </citation>
    <scope>FUNCTION</scope>
    <scope>CATALYTIC ACTIVITY</scope>
    <scope>SUBSTRATE SPECIFICITY</scope>
    <scope>BIOPHYSICOCHEMICAL PROPERTIES</scope>
    <scope>INDUCTION</scope>
    <scope>ACTIVITY REGULATION</scope>
    <scope>MUTAGENESIS OF SER-87; ASP-192; ASP-217 AND HIS-240</scope>
    <scope>ACTIVE SITE</scope>
    <scope>3D-STRUCTURE MODELING</scope>
    <source>
        <strain>H37Ra</strain>
        <strain>H37Rv</strain>
    </source>
</reference>
<organism>
    <name type="scientific">Mycobacterium tuberculosis (strain ATCC 25618 / H37Rv)</name>
    <dbReference type="NCBI Taxonomy" id="83332"/>
    <lineage>
        <taxon>Bacteria</taxon>
        <taxon>Bacillati</taxon>
        <taxon>Actinomycetota</taxon>
        <taxon>Actinomycetes</taxon>
        <taxon>Mycobacteriales</taxon>
        <taxon>Mycobacteriaceae</taxon>
        <taxon>Mycobacterium</taxon>
        <taxon>Mycobacterium tuberculosis complex</taxon>
    </lineage>
</organism>
<gene>
    <name evidence="2" type="primary">lipV</name>
    <name evidence="7" type="ordered locus">Rv3203</name>
</gene>
<sequence length="261" mass="27868">MIIDLHVQRYGPSGPARVLTIHGVTEHGRIWHRLAHHLPEIPIAAPDLLGHGRSPWAAPWTIDANVSALAALLDNQGDGPVVVVGHSFGGAVAMHLAAARPDQVAALVLLDPAVALDGSRVREVVDAMLASPDYLDPAEARAEKATGAWADVDPPVLDAELDEHLVALPNGRYGWRISLPAMVCYWSELARDIVLPPVGTATTLVRAVRASPAYVSDQLLAALDKRLGADFELLDFDCGHMVPQAKPTEVAAVIRSRLGPR</sequence>
<keyword id="KW-0903">Direct protein sequencing</keyword>
<keyword id="KW-0378">Hydrolase</keyword>
<keyword id="KW-0442">Lipid degradation</keyword>
<keyword id="KW-0443">Lipid metabolism</keyword>
<keyword id="KW-1185">Reference proteome</keyword>
<keyword id="KW-0719">Serine esterase</keyword>
<dbReference type="EC" id="3.1.1.1" evidence="1"/>
<dbReference type="EMBL" id="AL123456">
    <property type="protein sequence ID" value="CCP46018.1"/>
    <property type="status" value="ALT_FRAME"/>
    <property type="molecule type" value="Genomic_DNA"/>
</dbReference>
<dbReference type="RefSeq" id="NP_217719.1">
    <property type="nucleotide sequence ID" value="NC_000962.3"/>
</dbReference>
<dbReference type="RefSeq" id="WP_003416843.1">
    <property type="nucleotide sequence ID" value="NC_000962.3"/>
</dbReference>
<dbReference type="RefSeq" id="WP_003899968.1">
    <property type="nucleotide sequence ID" value="NZ_NVQJ01000003.1"/>
</dbReference>
<dbReference type="STRING" id="83332.Rv3203"/>
<dbReference type="SwissLipids" id="SLP:000001376"/>
<dbReference type="ESTHER" id="myctu-lipv">
    <property type="family name" value="6_AlphaBeta_hydrolase"/>
</dbReference>
<dbReference type="PaxDb" id="83332-Rv3203"/>
<dbReference type="DNASU" id="888133"/>
<dbReference type="GeneID" id="888133"/>
<dbReference type="KEGG" id="mtu:Rv3203"/>
<dbReference type="KEGG" id="mtv:RVBD_3203"/>
<dbReference type="PATRIC" id="fig|83332.12.peg.3582"/>
<dbReference type="TubercuList" id="Rv3203"/>
<dbReference type="eggNOG" id="COG0596">
    <property type="taxonomic scope" value="Bacteria"/>
</dbReference>
<dbReference type="InParanoid" id="L0TC47"/>
<dbReference type="OrthoDB" id="3193334at2"/>
<dbReference type="Proteomes" id="UP000001584">
    <property type="component" value="Chromosome"/>
</dbReference>
<dbReference type="GO" id="GO:0106435">
    <property type="term" value="F:carboxylesterase activity"/>
    <property type="evidence" value="ECO:0007669"/>
    <property type="project" value="UniProtKB-EC"/>
</dbReference>
<dbReference type="GO" id="GO:0005504">
    <property type="term" value="F:fatty acid binding"/>
    <property type="evidence" value="ECO:0000314"/>
    <property type="project" value="UniProtKB"/>
</dbReference>
<dbReference type="GO" id="GO:0016787">
    <property type="term" value="F:hydrolase activity"/>
    <property type="evidence" value="ECO:0000318"/>
    <property type="project" value="GO_Central"/>
</dbReference>
<dbReference type="GO" id="GO:0016298">
    <property type="term" value="F:lipase activity"/>
    <property type="evidence" value="ECO:0000314"/>
    <property type="project" value="UniProtKB"/>
</dbReference>
<dbReference type="GO" id="GO:0071468">
    <property type="term" value="P:cellular response to acidic pH"/>
    <property type="evidence" value="ECO:0000314"/>
    <property type="project" value="UniProtKB"/>
</dbReference>
<dbReference type="GO" id="GO:0009062">
    <property type="term" value="P:fatty acid catabolic process"/>
    <property type="evidence" value="ECO:0000314"/>
    <property type="project" value="UniProtKB"/>
</dbReference>
<dbReference type="Gene3D" id="3.40.50.1820">
    <property type="entry name" value="alpha/beta hydrolase"/>
    <property type="match status" value="1"/>
</dbReference>
<dbReference type="InterPro" id="IPR000073">
    <property type="entry name" value="AB_hydrolase_1"/>
</dbReference>
<dbReference type="InterPro" id="IPR029058">
    <property type="entry name" value="AB_hydrolase_fold"/>
</dbReference>
<dbReference type="InterPro" id="IPR050266">
    <property type="entry name" value="AB_hydrolase_sf"/>
</dbReference>
<dbReference type="InterPro" id="IPR000639">
    <property type="entry name" value="Epox_hydrolase-like"/>
</dbReference>
<dbReference type="PANTHER" id="PTHR43798:SF33">
    <property type="entry name" value="HYDROLASE, PUTATIVE (AFU_ORTHOLOGUE AFUA_2G14860)-RELATED"/>
    <property type="match status" value="1"/>
</dbReference>
<dbReference type="PANTHER" id="PTHR43798">
    <property type="entry name" value="MONOACYLGLYCEROL LIPASE"/>
    <property type="match status" value="1"/>
</dbReference>
<dbReference type="Pfam" id="PF12697">
    <property type="entry name" value="Abhydrolase_6"/>
    <property type="match status" value="1"/>
</dbReference>
<dbReference type="PRINTS" id="PR00111">
    <property type="entry name" value="ABHYDROLASE"/>
</dbReference>
<dbReference type="PRINTS" id="PR00412">
    <property type="entry name" value="EPOXHYDRLASE"/>
</dbReference>
<dbReference type="SUPFAM" id="SSF53474">
    <property type="entry name" value="alpha/beta-Hydrolases"/>
    <property type="match status" value="1"/>
</dbReference>
<dbReference type="PROSITE" id="PS00120">
    <property type="entry name" value="LIPASE_SER"/>
    <property type="match status" value="1"/>
</dbReference>
<protein>
    <recommendedName>
        <fullName evidence="2">Lipase LipV</fullName>
        <ecNumber evidence="1">3.1.1.1</ecNumber>
    </recommendedName>
</protein>
<evidence type="ECO:0000269" key="1">
    <source>
    </source>
</evidence>
<evidence type="ECO:0000303" key="2">
    <source>
    </source>
</evidence>
<evidence type="ECO:0000305" key="3"/>
<evidence type="ECO:0000305" key="4">
    <source>
    </source>
</evidence>
<evidence type="ECO:0000305" key="5">
    <source>
    </source>
</evidence>
<evidence type="ECO:0000305" key="6">
    <source>
    </source>
</evidence>
<evidence type="ECO:0000312" key="7">
    <source>
        <dbReference type="EMBL" id="CCP46018.1"/>
    </source>
</evidence>
<name>LIPV_MYCTU</name>
<feature type="chain" id="PRO_0000432515" description="Lipase LipV">
    <location>
        <begin position="1"/>
        <end position="261"/>
    </location>
</feature>
<feature type="active site" description="Nucleophile" evidence="5">
    <location>
        <position position="87"/>
    </location>
</feature>
<feature type="active site" description="Charge relay system" evidence="5">
    <location>
        <position position="217"/>
    </location>
</feature>
<feature type="active site" description="Charge relay system" evidence="5">
    <location>
        <position position="240"/>
    </location>
</feature>
<feature type="mutagenesis site" description="Loss of enzymatic activity." evidence="1">
    <original>S</original>
    <variation>A</variation>
    <location>
        <position position="87"/>
    </location>
</feature>
<feature type="mutagenesis site" description="No effect on enzymatic activity." evidence="1">
    <original>D</original>
    <variation>A</variation>
    <location>
        <position position="192"/>
    </location>
</feature>
<feature type="mutagenesis site" description="Loss of more than 70% enzymatic activity." evidence="1">
    <original>D</original>
    <variation>A</variation>
    <location>
        <position position="217"/>
    </location>
</feature>
<feature type="mutagenesis site" description="Loss of enzymatic activity." evidence="1">
    <original>H</original>
    <variation>A</variation>
    <location>
        <position position="240"/>
    </location>
</feature>
<proteinExistence type="evidence at protein level"/>
<comment type="function">
    <text evidence="1">Lipase that displays broad substrate specificity and preferentially hydrolyzes p-nitrophenyl myristate in vitro. Also shows significant activity with pNP-butyrate (68%), pNP-octanoate (82%), pNP-decanoate (90%), and pNP-laurate (74%). Is probably involved in lipid catabolism. Is active at low pH, and might play some important role in mycobacterial biology in macrophages where the bacteria encounters acidic stress.</text>
</comment>
<comment type="catalytic activity">
    <reaction evidence="1">
        <text>a carboxylic ester + H2O = an alcohol + a carboxylate + H(+)</text>
        <dbReference type="Rhea" id="RHEA:21164"/>
        <dbReference type="ChEBI" id="CHEBI:15377"/>
        <dbReference type="ChEBI" id="CHEBI:15378"/>
        <dbReference type="ChEBI" id="CHEBI:29067"/>
        <dbReference type="ChEBI" id="CHEBI:30879"/>
        <dbReference type="ChEBI" id="CHEBI:33308"/>
        <dbReference type="EC" id="3.1.1.1"/>
    </reaction>
</comment>
<comment type="catalytic activity">
    <reaction evidence="1">
        <text>a tetradecanoate ester + H2O = an aliphatic alcohol + tetradecanoate + H(+)</text>
        <dbReference type="Rhea" id="RHEA:47388"/>
        <dbReference type="ChEBI" id="CHEBI:2571"/>
        <dbReference type="ChEBI" id="CHEBI:15377"/>
        <dbReference type="ChEBI" id="CHEBI:15378"/>
        <dbReference type="ChEBI" id="CHEBI:30807"/>
        <dbReference type="ChEBI" id="CHEBI:87691"/>
    </reaction>
</comment>
<comment type="catalytic activity">
    <reaction evidence="1">
        <text>decanoate ester + H2O = decanoate + an aliphatic alcohol + H(+)</text>
        <dbReference type="Rhea" id="RHEA:47360"/>
        <dbReference type="ChEBI" id="CHEBI:2571"/>
        <dbReference type="ChEBI" id="CHEBI:15377"/>
        <dbReference type="ChEBI" id="CHEBI:15378"/>
        <dbReference type="ChEBI" id="CHEBI:27689"/>
        <dbReference type="ChEBI" id="CHEBI:87658"/>
    </reaction>
</comment>
<comment type="catalytic activity">
    <reaction evidence="1">
        <text>an octanoate ester + H2O = an aliphatic alcohol + octanoate + H(+)</text>
        <dbReference type="Rhea" id="RHEA:47356"/>
        <dbReference type="ChEBI" id="CHEBI:2571"/>
        <dbReference type="ChEBI" id="CHEBI:15377"/>
        <dbReference type="ChEBI" id="CHEBI:15378"/>
        <dbReference type="ChEBI" id="CHEBI:25646"/>
        <dbReference type="ChEBI" id="CHEBI:87657"/>
    </reaction>
</comment>
<comment type="catalytic activity">
    <reaction evidence="1">
        <text>a dodecanoate ester + H2O = an aliphatic alcohol + dodecanoate + H(+)</text>
        <dbReference type="Rhea" id="RHEA:47364"/>
        <dbReference type="ChEBI" id="CHEBI:2571"/>
        <dbReference type="ChEBI" id="CHEBI:15377"/>
        <dbReference type="ChEBI" id="CHEBI:15378"/>
        <dbReference type="ChEBI" id="CHEBI:18262"/>
        <dbReference type="ChEBI" id="CHEBI:87659"/>
    </reaction>
</comment>
<comment type="catalytic activity">
    <reaction evidence="1">
        <text>a butanoate ester + H2O = an aliphatic alcohol + butanoate + H(+)</text>
        <dbReference type="Rhea" id="RHEA:47348"/>
        <dbReference type="ChEBI" id="CHEBI:2571"/>
        <dbReference type="ChEBI" id="CHEBI:15377"/>
        <dbReference type="ChEBI" id="CHEBI:15378"/>
        <dbReference type="ChEBI" id="CHEBI:17968"/>
        <dbReference type="ChEBI" id="CHEBI:50477"/>
    </reaction>
</comment>
<comment type="catalytic activity">
    <reaction evidence="1">
        <text>hexadecanoate ester + H2O = an aliphatic alcohol + hexadecanoate + H(+)</text>
        <dbReference type="Rhea" id="RHEA:47392"/>
        <dbReference type="ChEBI" id="CHEBI:2571"/>
        <dbReference type="ChEBI" id="CHEBI:7896"/>
        <dbReference type="ChEBI" id="CHEBI:15377"/>
        <dbReference type="ChEBI" id="CHEBI:15378"/>
        <dbReference type="ChEBI" id="CHEBI:25835"/>
    </reaction>
</comment>
<comment type="catalytic activity">
    <reaction evidence="1">
        <text>octadecanoate ester + H2O = an aliphatic alcohol + octadecanoate + H(+)</text>
        <dbReference type="Rhea" id="RHEA:47396"/>
        <dbReference type="ChEBI" id="CHEBI:2571"/>
        <dbReference type="ChEBI" id="CHEBI:15377"/>
        <dbReference type="ChEBI" id="CHEBI:15378"/>
        <dbReference type="ChEBI" id="CHEBI:25629"/>
        <dbReference type="ChEBI" id="CHEBI:75925"/>
    </reaction>
</comment>
<comment type="activity regulation">
    <text evidence="1">Is inhibited by tetrahydrolipstatin, a specific lipase inhibitor and RHC 80267, a diacylglycerol lipase inhibitor, but not by phenylglyoxal and iodoacetate.</text>
</comment>
<comment type="biophysicochemical properties">
    <kinetics>
        <KM evidence="1">714.28 uM for pNP-myristate</KM>
        <text evidence="1">kcat is 1312 sec(-1) with pNP-myristate as substrate.</text>
    </kinetics>
    <phDependence>
        <text evidence="1">Optimum pH is 8.0. Retains nearly 60% enzyme activity at pH 6.0. The relative stability of purified enzyme is high at acidic pH and neutral pH (4.0-7.0) as compared to its relative stability at higher pH (9.0-10.0).</text>
    </phDependence>
    <temperatureDependence>
        <text evidence="1">Optimum temperature is 50 degrees Celsius.</text>
    </temperatureDependence>
</comment>
<comment type="induction">
    <text evidence="1">Expression is early up-regulated during acidic stress as compared to normal whereas no expression is observed under nutrient and oxidative stress conditions.</text>
</comment>
<comment type="similarity">
    <text evidence="3">Belongs to the AB hydrolase superfamily.</text>
</comment>
<comment type="sequence caution" evidence="4 6">
    <conflict type="frameshift">
        <sequence resource="EMBL-CDS" id="CCP46018"/>
    </conflict>
</comment>